<proteinExistence type="evidence at transcript level"/>
<gene>
    <name evidence="1" type="primary">Eef1akmt4</name>
</gene>
<keyword id="KW-0025">Alternative splicing</keyword>
<keyword id="KW-0489">Methyltransferase</keyword>
<keyword id="KW-0597">Phosphoprotein</keyword>
<keyword id="KW-1185">Reference proteome</keyword>
<keyword id="KW-0949">S-adenosyl-L-methionine</keyword>
<keyword id="KW-0808">Transferase</keyword>
<feature type="chain" id="PRO_0000443291" description="EEF1A lysine methyltransferase 4">
    <location>
        <begin position="1"/>
        <end position="255"/>
    </location>
</feature>
<feature type="short sequence motif" description="Required for methyltransferase activity" evidence="1">
    <location>
        <begin position="129"/>
        <end position="134"/>
    </location>
</feature>
<feature type="binding site" evidence="1">
    <location>
        <position position="26"/>
    </location>
    <ligand>
        <name>S-adenosyl-L-methionine</name>
        <dbReference type="ChEBI" id="CHEBI:59789"/>
    </ligand>
</feature>
<feature type="binding site" evidence="1">
    <location>
        <position position="30"/>
    </location>
    <ligand>
        <name>S-adenosyl-L-methionine</name>
        <dbReference type="ChEBI" id="CHEBI:59789"/>
    </ligand>
</feature>
<feature type="binding site" evidence="1">
    <location>
        <position position="41"/>
    </location>
    <ligand>
        <name>S-adenosyl-L-methionine</name>
        <dbReference type="ChEBI" id="CHEBI:59789"/>
    </ligand>
</feature>
<feature type="binding site" evidence="1">
    <location>
        <position position="66"/>
    </location>
    <ligand>
        <name>S-adenosyl-L-methionine</name>
        <dbReference type="ChEBI" id="CHEBI:59789"/>
    </ligand>
</feature>
<feature type="binding site" evidence="1">
    <location>
        <begin position="88"/>
        <end position="89"/>
    </location>
    <ligand>
        <name>S-adenosyl-L-methionine</name>
        <dbReference type="ChEBI" id="CHEBI:59789"/>
    </ligand>
</feature>
<feature type="binding site" evidence="1">
    <location>
        <begin position="113"/>
        <end position="114"/>
    </location>
    <ligand>
        <name>S-adenosyl-L-methionine</name>
        <dbReference type="ChEBI" id="CHEBI:59789"/>
    </ligand>
</feature>
<feature type="binding site" evidence="1">
    <location>
        <position position="130"/>
    </location>
    <ligand>
        <name>S-adenosyl-L-methionine</name>
        <dbReference type="ChEBI" id="CHEBI:59789"/>
    </ligand>
</feature>
<feature type="modified residue" description="Phosphotyrosine" evidence="1">
    <location>
        <position position="39"/>
    </location>
</feature>
<feature type="sequence conflict" description="In Ref. 1; BAB25257." evidence="2" ref="1">
    <original>E</original>
    <variation>V</variation>
    <location>
        <position position="160"/>
    </location>
</feature>
<name>EFMT4_MOUSE</name>
<accession>P0DPE0</accession>
<accession>Q14BY3</accession>
<accession>Q80Z59</accession>
<accession>Q80Z60</accession>
<accession>Q9D8Q9</accession>
<accession>Q9D928</accession>
<organism>
    <name type="scientific">Mus musculus</name>
    <name type="common">Mouse</name>
    <dbReference type="NCBI Taxonomy" id="10090"/>
    <lineage>
        <taxon>Eukaryota</taxon>
        <taxon>Metazoa</taxon>
        <taxon>Chordata</taxon>
        <taxon>Craniata</taxon>
        <taxon>Vertebrata</taxon>
        <taxon>Euteleostomi</taxon>
        <taxon>Mammalia</taxon>
        <taxon>Eutheria</taxon>
        <taxon>Euarchontoglires</taxon>
        <taxon>Glires</taxon>
        <taxon>Rodentia</taxon>
        <taxon>Myomorpha</taxon>
        <taxon>Muroidea</taxon>
        <taxon>Muridae</taxon>
        <taxon>Murinae</taxon>
        <taxon>Mus</taxon>
        <taxon>Mus</taxon>
    </lineage>
</organism>
<protein>
    <recommendedName>
        <fullName evidence="1">EEF1A lysine methyltransferase 4</fullName>
        <ecNumber evidence="1">2.1.1.-</ecNumber>
    </recommendedName>
</protein>
<dbReference type="EC" id="2.1.1.-" evidence="1"/>
<dbReference type="EMBL" id="AK007407">
    <property type="protein sequence ID" value="BAB25019.1"/>
    <property type="molecule type" value="mRNA"/>
</dbReference>
<dbReference type="EMBL" id="AK007791">
    <property type="protein sequence ID" value="BAB25257.1"/>
    <property type="status" value="ALT_FRAME"/>
    <property type="molecule type" value="mRNA"/>
</dbReference>
<dbReference type="EMBL" id="AC087898">
    <property type="status" value="NOT_ANNOTATED_CDS"/>
    <property type="molecule type" value="Genomic_DNA"/>
</dbReference>
<dbReference type="EMBL" id="BC115541">
    <property type="protein sequence ID" value="AAI15542.1"/>
    <property type="molecule type" value="mRNA"/>
</dbReference>
<dbReference type="CCDS" id="CCDS37290.1"/>
<dbReference type="RefSeq" id="NP_079738.2">
    <molecule id="P0DPE0-1"/>
    <property type="nucleotide sequence ID" value="NM_025462.2"/>
</dbReference>
<dbReference type="RefSeq" id="NP_808809.1">
    <property type="nucleotide sequence ID" value="NM_177940.1"/>
</dbReference>
<dbReference type="RefSeq" id="NP_808810.1">
    <property type="nucleotide sequence ID" value="NM_177941.1"/>
</dbReference>
<dbReference type="SMR" id="P0DPE0"/>
<dbReference type="FunCoup" id="P0DPE0">
    <property type="interactions" value="414"/>
</dbReference>
<dbReference type="STRING" id="10090.ENSMUSP00000111184"/>
<dbReference type="PhosphoSitePlus" id="P0DPE0"/>
<dbReference type="ProteomicsDB" id="277766"/>
<dbReference type="Pumba" id="P0DPE0"/>
<dbReference type="Ensembl" id="ENSMUST00000115522.10">
    <molecule id="P0DPE0-1"/>
    <property type="protein sequence ID" value="ENSMUSP00000111184.3"/>
    <property type="gene ID" value="ENSMUSG00000115219.3"/>
</dbReference>
<dbReference type="GeneID" id="110599566"/>
<dbReference type="GeneID" id="110599584"/>
<dbReference type="KEGG" id="mmu:110599566"/>
<dbReference type="KEGG" id="mmu:110599584"/>
<dbReference type="CTD" id="110599564"/>
<dbReference type="CTD" id="110599584"/>
<dbReference type="MGI" id="MGI:5903914">
    <property type="gene designation" value="Eef1akmt4"/>
</dbReference>
<dbReference type="VEuPathDB" id="HostDB:ENSMUSG00000115219"/>
<dbReference type="GeneTree" id="ENSGT00940000164140"/>
<dbReference type="InParanoid" id="P0DPE0"/>
<dbReference type="OMA" id="HWAVMDA"/>
<dbReference type="OrthoDB" id="411785at2759"/>
<dbReference type="PRO" id="PR:P0DPE0"/>
<dbReference type="Proteomes" id="UP000000589">
    <property type="component" value="Chromosome 16"/>
</dbReference>
<dbReference type="Bgee" id="ENSMUSG00000115219">
    <property type="expression patterns" value="Expressed in humerus cartilage element and 207 other cell types or tissues"/>
</dbReference>
<dbReference type="ExpressionAtlas" id="P0DPE0">
    <property type="expression patterns" value="baseline and differential"/>
</dbReference>
<dbReference type="GO" id="GO:0008168">
    <property type="term" value="F:methyltransferase activity"/>
    <property type="evidence" value="ECO:0000250"/>
    <property type="project" value="UniProtKB"/>
</dbReference>
<dbReference type="GO" id="GO:0016279">
    <property type="term" value="F:protein-lysine N-methyltransferase activity"/>
    <property type="evidence" value="ECO:0000250"/>
    <property type="project" value="UniProtKB"/>
</dbReference>
<dbReference type="GO" id="GO:0032259">
    <property type="term" value="P:methylation"/>
    <property type="evidence" value="ECO:0007669"/>
    <property type="project" value="UniProtKB-KW"/>
</dbReference>
<dbReference type="CDD" id="cd02440">
    <property type="entry name" value="AdoMet_MTases"/>
    <property type="match status" value="1"/>
</dbReference>
<dbReference type="FunFam" id="3.40.50.150:FF:000111">
    <property type="entry name" value="EEF1A lysine methyltransferase 4"/>
    <property type="match status" value="1"/>
</dbReference>
<dbReference type="Gene3D" id="3.40.50.150">
    <property type="entry name" value="Vaccinia Virus protein VP39"/>
    <property type="match status" value="1"/>
</dbReference>
<dbReference type="InterPro" id="IPR051419">
    <property type="entry name" value="Lys/N-term_MeTrsfase_sf"/>
</dbReference>
<dbReference type="InterPro" id="IPR013216">
    <property type="entry name" value="Methyltransf_11"/>
</dbReference>
<dbReference type="InterPro" id="IPR029063">
    <property type="entry name" value="SAM-dependent_MTases_sf"/>
</dbReference>
<dbReference type="PANTHER" id="PTHR12176:SF80">
    <property type="entry name" value="EEF1A LYSINE METHYLTRANSFERASE 4"/>
    <property type="match status" value="1"/>
</dbReference>
<dbReference type="PANTHER" id="PTHR12176">
    <property type="entry name" value="SAM-DEPENDENT METHYLTRANSFERASE SUPERFAMILY PROTEIN"/>
    <property type="match status" value="1"/>
</dbReference>
<dbReference type="Pfam" id="PF08241">
    <property type="entry name" value="Methyltransf_11"/>
    <property type="match status" value="1"/>
</dbReference>
<dbReference type="SUPFAM" id="SSF53335">
    <property type="entry name" value="S-adenosyl-L-methionine-dependent methyltransferases"/>
    <property type="match status" value="1"/>
</dbReference>
<evidence type="ECO:0000250" key="1">
    <source>
        <dbReference type="UniProtKB" id="P0DPD7"/>
    </source>
</evidence>
<evidence type="ECO:0000305" key="2"/>
<comment type="function">
    <text evidence="1">Protein-lysine methyltransferase that efficiently catalyzes three successive methylations on 'Lys-36' in eukaryotic translation elongation factor 1 alpha (EEF1A1 or EEF1A2).</text>
</comment>
<comment type="catalytic activity">
    <reaction evidence="1">
        <text>L-lysyl-[protein] + S-adenosyl-L-methionine = N(6)-methyl-L-lysyl-[protein] + S-adenosyl-L-homocysteine + H(+)</text>
        <dbReference type="Rhea" id="RHEA:51736"/>
        <dbReference type="Rhea" id="RHEA-COMP:9752"/>
        <dbReference type="Rhea" id="RHEA-COMP:13053"/>
        <dbReference type="ChEBI" id="CHEBI:15378"/>
        <dbReference type="ChEBI" id="CHEBI:29969"/>
        <dbReference type="ChEBI" id="CHEBI:57856"/>
        <dbReference type="ChEBI" id="CHEBI:59789"/>
        <dbReference type="ChEBI" id="CHEBI:61929"/>
    </reaction>
</comment>
<comment type="catalytic activity">
    <reaction evidence="1">
        <text>N(6)-methyl-L-lysyl-[protein] + S-adenosyl-L-methionine = N(6),N(6)-dimethyl-L-lysyl-[protein] + S-adenosyl-L-homocysteine + H(+)</text>
        <dbReference type="Rhea" id="RHEA:54196"/>
        <dbReference type="Rhea" id="RHEA-COMP:13053"/>
        <dbReference type="Rhea" id="RHEA-COMP:13827"/>
        <dbReference type="ChEBI" id="CHEBI:15378"/>
        <dbReference type="ChEBI" id="CHEBI:57856"/>
        <dbReference type="ChEBI" id="CHEBI:59789"/>
        <dbReference type="ChEBI" id="CHEBI:61929"/>
        <dbReference type="ChEBI" id="CHEBI:61976"/>
    </reaction>
</comment>
<comment type="catalytic activity">
    <reaction evidence="1">
        <text>N(6),N(6)-dimethyl-L-lysyl-[protein] + S-adenosyl-L-methionine = N(6),N(6),N(6)-trimethyl-L-lysyl-[protein] + S-adenosyl-L-homocysteine + H(+)</text>
        <dbReference type="Rhea" id="RHEA:54200"/>
        <dbReference type="Rhea" id="RHEA-COMP:13826"/>
        <dbReference type="Rhea" id="RHEA-COMP:13827"/>
        <dbReference type="ChEBI" id="CHEBI:15378"/>
        <dbReference type="ChEBI" id="CHEBI:57856"/>
        <dbReference type="ChEBI" id="CHEBI:59789"/>
        <dbReference type="ChEBI" id="CHEBI:61961"/>
        <dbReference type="ChEBI" id="CHEBI:61976"/>
    </reaction>
</comment>
<comment type="alternative products">
    <event type="alternative splicing"/>
    <isoform>
        <id>P0DPE0-1</id>
        <id>Q80Z60-3</id>
        <name>Eef1akmt4-1</name>
        <sequence type="displayed"/>
    </isoform>
    <isoform>
        <id>P0DPD9-1</id>
        <id>Q80Z60-1</id>
        <name>Eef1akmt4-Ece2-1</name>
        <name>ECE-2a-1</name>
        <sequence type="external"/>
    </isoform>
    <isoform>
        <id>P0DPD9-2</id>
        <id>Q80Z60-2</id>
        <name>Eef1akmt4-Ece2-2</name>
        <name>ECE-2a-2</name>
        <sequence type="external"/>
    </isoform>
</comment>
<comment type="similarity">
    <text evidence="2">Belongs to the methyltransferase superfamily.</text>
</comment>
<comment type="sequence caution" evidence="2">
    <conflict type="frameshift">
        <sequence resource="EMBL-CDS" id="BAB25257"/>
    </conflict>
</comment>
<reference key="1">
    <citation type="journal article" date="2005" name="Science">
        <title>The transcriptional landscape of the mammalian genome.</title>
        <authorList>
            <person name="Carninci P."/>
            <person name="Kasukawa T."/>
            <person name="Katayama S."/>
            <person name="Gough J."/>
            <person name="Frith M.C."/>
            <person name="Maeda N."/>
            <person name="Oyama R."/>
            <person name="Ravasi T."/>
            <person name="Lenhard B."/>
            <person name="Wells C."/>
            <person name="Kodzius R."/>
            <person name="Shimokawa K."/>
            <person name="Bajic V.B."/>
            <person name="Brenner S.E."/>
            <person name="Batalov S."/>
            <person name="Forrest A.R."/>
            <person name="Zavolan M."/>
            <person name="Davis M.J."/>
            <person name="Wilming L.G."/>
            <person name="Aidinis V."/>
            <person name="Allen J.E."/>
            <person name="Ambesi-Impiombato A."/>
            <person name="Apweiler R."/>
            <person name="Aturaliya R.N."/>
            <person name="Bailey T.L."/>
            <person name="Bansal M."/>
            <person name="Baxter L."/>
            <person name="Beisel K.W."/>
            <person name="Bersano T."/>
            <person name="Bono H."/>
            <person name="Chalk A.M."/>
            <person name="Chiu K.P."/>
            <person name="Choudhary V."/>
            <person name="Christoffels A."/>
            <person name="Clutterbuck D.R."/>
            <person name="Crowe M.L."/>
            <person name="Dalla E."/>
            <person name="Dalrymple B.P."/>
            <person name="de Bono B."/>
            <person name="Della Gatta G."/>
            <person name="di Bernardo D."/>
            <person name="Down T."/>
            <person name="Engstrom P."/>
            <person name="Fagiolini M."/>
            <person name="Faulkner G."/>
            <person name="Fletcher C.F."/>
            <person name="Fukushima T."/>
            <person name="Furuno M."/>
            <person name="Futaki S."/>
            <person name="Gariboldi M."/>
            <person name="Georgii-Hemming P."/>
            <person name="Gingeras T.R."/>
            <person name="Gojobori T."/>
            <person name="Green R.E."/>
            <person name="Gustincich S."/>
            <person name="Harbers M."/>
            <person name="Hayashi Y."/>
            <person name="Hensch T.K."/>
            <person name="Hirokawa N."/>
            <person name="Hill D."/>
            <person name="Huminiecki L."/>
            <person name="Iacono M."/>
            <person name="Ikeo K."/>
            <person name="Iwama A."/>
            <person name="Ishikawa T."/>
            <person name="Jakt M."/>
            <person name="Kanapin A."/>
            <person name="Katoh M."/>
            <person name="Kawasawa Y."/>
            <person name="Kelso J."/>
            <person name="Kitamura H."/>
            <person name="Kitano H."/>
            <person name="Kollias G."/>
            <person name="Krishnan S.P."/>
            <person name="Kruger A."/>
            <person name="Kummerfeld S.K."/>
            <person name="Kurochkin I.V."/>
            <person name="Lareau L.F."/>
            <person name="Lazarevic D."/>
            <person name="Lipovich L."/>
            <person name="Liu J."/>
            <person name="Liuni S."/>
            <person name="McWilliam S."/>
            <person name="Madan Babu M."/>
            <person name="Madera M."/>
            <person name="Marchionni L."/>
            <person name="Matsuda H."/>
            <person name="Matsuzawa S."/>
            <person name="Miki H."/>
            <person name="Mignone F."/>
            <person name="Miyake S."/>
            <person name="Morris K."/>
            <person name="Mottagui-Tabar S."/>
            <person name="Mulder N."/>
            <person name="Nakano N."/>
            <person name="Nakauchi H."/>
            <person name="Ng P."/>
            <person name="Nilsson R."/>
            <person name="Nishiguchi S."/>
            <person name="Nishikawa S."/>
            <person name="Nori F."/>
            <person name="Ohara O."/>
            <person name="Okazaki Y."/>
            <person name="Orlando V."/>
            <person name="Pang K.C."/>
            <person name="Pavan W.J."/>
            <person name="Pavesi G."/>
            <person name="Pesole G."/>
            <person name="Petrovsky N."/>
            <person name="Piazza S."/>
            <person name="Reed J."/>
            <person name="Reid J.F."/>
            <person name="Ring B.Z."/>
            <person name="Ringwald M."/>
            <person name="Rost B."/>
            <person name="Ruan Y."/>
            <person name="Salzberg S.L."/>
            <person name="Sandelin A."/>
            <person name="Schneider C."/>
            <person name="Schoenbach C."/>
            <person name="Sekiguchi K."/>
            <person name="Semple C.A."/>
            <person name="Seno S."/>
            <person name="Sessa L."/>
            <person name="Sheng Y."/>
            <person name="Shibata Y."/>
            <person name="Shimada H."/>
            <person name="Shimada K."/>
            <person name="Silva D."/>
            <person name="Sinclair B."/>
            <person name="Sperling S."/>
            <person name="Stupka E."/>
            <person name="Sugiura K."/>
            <person name="Sultana R."/>
            <person name="Takenaka Y."/>
            <person name="Taki K."/>
            <person name="Tammoja K."/>
            <person name="Tan S.L."/>
            <person name="Tang S."/>
            <person name="Taylor M.S."/>
            <person name="Tegner J."/>
            <person name="Teichmann S.A."/>
            <person name="Ueda H.R."/>
            <person name="van Nimwegen E."/>
            <person name="Verardo R."/>
            <person name="Wei C.L."/>
            <person name="Yagi K."/>
            <person name="Yamanishi H."/>
            <person name="Zabarovsky E."/>
            <person name="Zhu S."/>
            <person name="Zimmer A."/>
            <person name="Hide W."/>
            <person name="Bult C."/>
            <person name="Grimmond S.M."/>
            <person name="Teasdale R.D."/>
            <person name="Liu E.T."/>
            <person name="Brusic V."/>
            <person name="Quackenbush J."/>
            <person name="Wahlestedt C."/>
            <person name="Mattick J.S."/>
            <person name="Hume D.A."/>
            <person name="Kai C."/>
            <person name="Sasaki D."/>
            <person name="Tomaru Y."/>
            <person name="Fukuda S."/>
            <person name="Kanamori-Katayama M."/>
            <person name="Suzuki M."/>
            <person name="Aoki J."/>
            <person name="Arakawa T."/>
            <person name="Iida J."/>
            <person name="Imamura K."/>
            <person name="Itoh M."/>
            <person name="Kato T."/>
            <person name="Kawaji H."/>
            <person name="Kawagashira N."/>
            <person name="Kawashima T."/>
            <person name="Kojima M."/>
            <person name="Kondo S."/>
            <person name="Konno H."/>
            <person name="Nakano K."/>
            <person name="Ninomiya N."/>
            <person name="Nishio T."/>
            <person name="Okada M."/>
            <person name="Plessy C."/>
            <person name="Shibata K."/>
            <person name="Shiraki T."/>
            <person name="Suzuki S."/>
            <person name="Tagami M."/>
            <person name="Waki K."/>
            <person name="Watahiki A."/>
            <person name="Okamura-Oho Y."/>
            <person name="Suzuki H."/>
            <person name="Kawai J."/>
            <person name="Hayashizaki Y."/>
        </authorList>
    </citation>
    <scope>NUCLEOTIDE SEQUENCE [LARGE SCALE MRNA]</scope>
    <source>
        <strain>C57BL/6J</strain>
        <tissue>Pancreas</tissue>
    </source>
</reference>
<reference key="2">
    <citation type="journal article" date="2009" name="PLoS Biol.">
        <title>Lineage-specific biology revealed by a finished genome assembly of the mouse.</title>
        <authorList>
            <person name="Church D.M."/>
            <person name="Goodstadt L."/>
            <person name="Hillier L.W."/>
            <person name="Zody M.C."/>
            <person name="Goldstein S."/>
            <person name="She X."/>
            <person name="Bult C.J."/>
            <person name="Agarwala R."/>
            <person name="Cherry J.L."/>
            <person name="DiCuccio M."/>
            <person name="Hlavina W."/>
            <person name="Kapustin Y."/>
            <person name="Meric P."/>
            <person name="Maglott D."/>
            <person name="Birtle Z."/>
            <person name="Marques A.C."/>
            <person name="Graves T."/>
            <person name="Zhou S."/>
            <person name="Teague B."/>
            <person name="Potamousis K."/>
            <person name="Churas C."/>
            <person name="Place M."/>
            <person name="Herschleb J."/>
            <person name="Runnheim R."/>
            <person name="Forrest D."/>
            <person name="Amos-Landgraf J."/>
            <person name="Schwartz D.C."/>
            <person name="Cheng Z."/>
            <person name="Lindblad-Toh K."/>
            <person name="Eichler E.E."/>
            <person name="Ponting C.P."/>
        </authorList>
    </citation>
    <scope>NUCLEOTIDE SEQUENCE [LARGE SCALE GENOMIC DNA]</scope>
    <source>
        <strain>C57BL/6J</strain>
    </source>
</reference>
<reference key="3">
    <citation type="journal article" date="2004" name="Genome Res.">
        <title>The status, quality, and expansion of the NIH full-length cDNA project: the Mammalian Gene Collection (MGC).</title>
        <authorList>
            <consortium name="The MGC Project Team"/>
        </authorList>
    </citation>
    <scope>NUCLEOTIDE SEQUENCE [LARGE SCALE MRNA]</scope>
</reference>
<sequence>MASPRTPVSPPELPEKNFQYRQVQYWDQRYKDAADSGPYEWFGDFASFRALLEPELCPEDRILVLGCGNSALSYELFLGGFPNVTSVDYSPVVVAAMQVRYAHVPSLRWETMDVRALDFPSGSFDVVLEKGTLDAMLAGEPDPWNVSSEGVHTVDQVLSEVSRLLVPGGRFISMTSAGPHFRIRHYAQSRYDWSLRHTTYSSGFHFHFYIMHKGRALSVSQLALGAQILSSPSPPASPCFLQDSDNEDFLSAIQL</sequence>